<name>OBG_BEII9</name>
<accession>B2IE44</accession>
<comment type="function">
    <text evidence="1">An essential GTPase which binds GTP, GDP and possibly (p)ppGpp with moderate affinity, with high nucleotide exchange rates and a fairly low GTP hydrolysis rate. Plays a role in control of the cell cycle, stress response, ribosome biogenesis and in those bacteria that undergo differentiation, in morphogenesis control.</text>
</comment>
<comment type="cofactor">
    <cofactor evidence="1">
        <name>Mg(2+)</name>
        <dbReference type="ChEBI" id="CHEBI:18420"/>
    </cofactor>
</comment>
<comment type="subunit">
    <text evidence="1">Monomer.</text>
</comment>
<comment type="subcellular location">
    <subcellularLocation>
        <location evidence="1">Cytoplasm</location>
    </subcellularLocation>
</comment>
<comment type="similarity">
    <text evidence="1">Belongs to the TRAFAC class OBG-HflX-like GTPase superfamily. OBG GTPase family.</text>
</comment>
<organism>
    <name type="scientific">Beijerinckia indica subsp. indica (strain ATCC 9039 / DSM 1715 / NCIMB 8712)</name>
    <dbReference type="NCBI Taxonomy" id="395963"/>
    <lineage>
        <taxon>Bacteria</taxon>
        <taxon>Pseudomonadati</taxon>
        <taxon>Pseudomonadota</taxon>
        <taxon>Alphaproteobacteria</taxon>
        <taxon>Hyphomicrobiales</taxon>
        <taxon>Beijerinckiaceae</taxon>
        <taxon>Beijerinckia</taxon>
    </lineage>
</organism>
<keyword id="KW-0963">Cytoplasm</keyword>
<keyword id="KW-0342">GTP-binding</keyword>
<keyword id="KW-0378">Hydrolase</keyword>
<keyword id="KW-0460">Magnesium</keyword>
<keyword id="KW-0479">Metal-binding</keyword>
<keyword id="KW-0547">Nucleotide-binding</keyword>
<keyword id="KW-1185">Reference proteome</keyword>
<reference key="1">
    <citation type="journal article" date="2010" name="J. Bacteriol.">
        <title>Complete genome sequence of Beijerinckia indica subsp. indica.</title>
        <authorList>
            <person name="Tamas I."/>
            <person name="Dedysh S.N."/>
            <person name="Liesack W."/>
            <person name="Stott M.B."/>
            <person name="Alam M."/>
            <person name="Murrell J.C."/>
            <person name="Dunfield P.F."/>
        </authorList>
    </citation>
    <scope>NUCLEOTIDE SEQUENCE [LARGE SCALE GENOMIC DNA]</scope>
    <source>
        <strain>ATCC 9039 / DSM 1715 / NCIMB 8712</strain>
    </source>
</reference>
<evidence type="ECO:0000255" key="1">
    <source>
        <dbReference type="HAMAP-Rule" id="MF_01454"/>
    </source>
</evidence>
<evidence type="ECO:0000255" key="2">
    <source>
        <dbReference type="PROSITE-ProRule" id="PRU01231"/>
    </source>
</evidence>
<feature type="chain" id="PRO_0000385741" description="GTPase Obg">
    <location>
        <begin position="1"/>
        <end position="348"/>
    </location>
</feature>
<feature type="domain" description="Obg" evidence="2">
    <location>
        <begin position="1"/>
        <end position="159"/>
    </location>
</feature>
<feature type="domain" description="OBG-type G" evidence="1">
    <location>
        <begin position="160"/>
        <end position="327"/>
    </location>
</feature>
<feature type="binding site" evidence="1">
    <location>
        <begin position="166"/>
        <end position="173"/>
    </location>
    <ligand>
        <name>GTP</name>
        <dbReference type="ChEBI" id="CHEBI:37565"/>
    </ligand>
</feature>
<feature type="binding site" evidence="1">
    <location>
        <position position="173"/>
    </location>
    <ligand>
        <name>Mg(2+)</name>
        <dbReference type="ChEBI" id="CHEBI:18420"/>
    </ligand>
</feature>
<feature type="binding site" evidence="1">
    <location>
        <begin position="191"/>
        <end position="195"/>
    </location>
    <ligand>
        <name>GTP</name>
        <dbReference type="ChEBI" id="CHEBI:37565"/>
    </ligand>
</feature>
<feature type="binding site" evidence="1">
    <location>
        <position position="193"/>
    </location>
    <ligand>
        <name>Mg(2+)</name>
        <dbReference type="ChEBI" id="CHEBI:18420"/>
    </ligand>
</feature>
<feature type="binding site" evidence="1">
    <location>
        <begin position="212"/>
        <end position="215"/>
    </location>
    <ligand>
        <name>GTP</name>
        <dbReference type="ChEBI" id="CHEBI:37565"/>
    </ligand>
</feature>
<feature type="binding site" evidence="1">
    <location>
        <begin position="279"/>
        <end position="282"/>
    </location>
    <ligand>
        <name>GTP</name>
        <dbReference type="ChEBI" id="CHEBI:37565"/>
    </ligand>
</feature>
<feature type="binding site" evidence="1">
    <location>
        <begin position="308"/>
        <end position="310"/>
    </location>
    <ligand>
        <name>GTP</name>
        <dbReference type="ChEBI" id="CHEBI:37565"/>
    </ligand>
</feature>
<sequence>MKFLDQARIYIRSGDGGAGCLSFRHEKFIEFGGPDGGDGGRGGDVVALCVEGLNTLIDYRYQQHFKAKTGTHGMGKNRAGARGADCILKVPAGTQIFDEDGETLIADLTEIGQSVCLARGGNGGFGNAHFKTSTNQAPRRANPGQEGEEMTLWLRLKLIADAGLVGLPNAGKSTFLSTVSAARPKIADYPFTTLHPQLGVVAYGDREFVLADIPGLIEGAHEGVGLGDRFLGHVERCRVLLHLVDAGCEHAGKAYKTIRKELAAYGNGLDEKPEIVALSKIDTVDAETLKNQMARLKRAAKRTPLKLSAATHTNLTETLQSLLAAIDAAGAAQEAAAEPAATSWHPCD</sequence>
<gene>
    <name evidence="1" type="primary">obg</name>
    <name type="ordered locus">Bind_0415</name>
</gene>
<dbReference type="EC" id="3.6.5.-" evidence="1"/>
<dbReference type="EMBL" id="CP001016">
    <property type="protein sequence ID" value="ACB94068.1"/>
    <property type="molecule type" value="Genomic_DNA"/>
</dbReference>
<dbReference type="RefSeq" id="WP_012383426.1">
    <property type="nucleotide sequence ID" value="NC_010581.1"/>
</dbReference>
<dbReference type="SMR" id="B2IE44"/>
<dbReference type="STRING" id="395963.Bind_0415"/>
<dbReference type="KEGG" id="bid:Bind_0415"/>
<dbReference type="eggNOG" id="COG0536">
    <property type="taxonomic scope" value="Bacteria"/>
</dbReference>
<dbReference type="HOGENOM" id="CLU_011747_2_0_5"/>
<dbReference type="OrthoDB" id="9807318at2"/>
<dbReference type="Proteomes" id="UP000001695">
    <property type="component" value="Chromosome"/>
</dbReference>
<dbReference type="GO" id="GO:0005737">
    <property type="term" value="C:cytoplasm"/>
    <property type="evidence" value="ECO:0007669"/>
    <property type="project" value="UniProtKB-SubCell"/>
</dbReference>
<dbReference type="GO" id="GO:0005525">
    <property type="term" value="F:GTP binding"/>
    <property type="evidence" value="ECO:0007669"/>
    <property type="project" value="UniProtKB-UniRule"/>
</dbReference>
<dbReference type="GO" id="GO:0003924">
    <property type="term" value="F:GTPase activity"/>
    <property type="evidence" value="ECO:0007669"/>
    <property type="project" value="UniProtKB-UniRule"/>
</dbReference>
<dbReference type="GO" id="GO:0000287">
    <property type="term" value="F:magnesium ion binding"/>
    <property type="evidence" value="ECO:0007669"/>
    <property type="project" value="InterPro"/>
</dbReference>
<dbReference type="GO" id="GO:0042254">
    <property type="term" value="P:ribosome biogenesis"/>
    <property type="evidence" value="ECO:0007669"/>
    <property type="project" value="UniProtKB-UniRule"/>
</dbReference>
<dbReference type="CDD" id="cd01898">
    <property type="entry name" value="Obg"/>
    <property type="match status" value="1"/>
</dbReference>
<dbReference type="FunFam" id="2.70.210.12:FF:000001">
    <property type="entry name" value="GTPase Obg"/>
    <property type="match status" value="1"/>
</dbReference>
<dbReference type="Gene3D" id="2.70.210.12">
    <property type="entry name" value="GTP1/OBG domain"/>
    <property type="match status" value="1"/>
</dbReference>
<dbReference type="Gene3D" id="3.40.50.300">
    <property type="entry name" value="P-loop containing nucleotide triphosphate hydrolases"/>
    <property type="match status" value="1"/>
</dbReference>
<dbReference type="HAMAP" id="MF_01454">
    <property type="entry name" value="GTPase_Obg"/>
    <property type="match status" value="1"/>
</dbReference>
<dbReference type="InterPro" id="IPR031167">
    <property type="entry name" value="G_OBG"/>
</dbReference>
<dbReference type="InterPro" id="IPR006073">
    <property type="entry name" value="GTP-bd"/>
</dbReference>
<dbReference type="InterPro" id="IPR014100">
    <property type="entry name" value="GTP-bd_Obg/CgtA"/>
</dbReference>
<dbReference type="InterPro" id="IPR006074">
    <property type="entry name" value="GTP1-OBG_CS"/>
</dbReference>
<dbReference type="InterPro" id="IPR006169">
    <property type="entry name" value="GTP1_OBG_dom"/>
</dbReference>
<dbReference type="InterPro" id="IPR036726">
    <property type="entry name" value="GTP1_OBG_dom_sf"/>
</dbReference>
<dbReference type="InterPro" id="IPR045086">
    <property type="entry name" value="OBG_GTPase"/>
</dbReference>
<dbReference type="InterPro" id="IPR027417">
    <property type="entry name" value="P-loop_NTPase"/>
</dbReference>
<dbReference type="NCBIfam" id="TIGR02729">
    <property type="entry name" value="Obg_CgtA"/>
    <property type="match status" value="1"/>
</dbReference>
<dbReference type="NCBIfam" id="NF008955">
    <property type="entry name" value="PRK12297.1"/>
    <property type="match status" value="1"/>
</dbReference>
<dbReference type="NCBIfam" id="NF008956">
    <property type="entry name" value="PRK12299.1"/>
    <property type="match status" value="1"/>
</dbReference>
<dbReference type="PANTHER" id="PTHR11702">
    <property type="entry name" value="DEVELOPMENTALLY REGULATED GTP-BINDING PROTEIN-RELATED"/>
    <property type="match status" value="1"/>
</dbReference>
<dbReference type="PANTHER" id="PTHR11702:SF31">
    <property type="entry name" value="MITOCHONDRIAL RIBOSOME-ASSOCIATED GTPASE 2"/>
    <property type="match status" value="1"/>
</dbReference>
<dbReference type="Pfam" id="PF01018">
    <property type="entry name" value="GTP1_OBG"/>
    <property type="match status" value="1"/>
</dbReference>
<dbReference type="Pfam" id="PF01926">
    <property type="entry name" value="MMR_HSR1"/>
    <property type="match status" value="1"/>
</dbReference>
<dbReference type="PIRSF" id="PIRSF002401">
    <property type="entry name" value="GTP_bd_Obg/CgtA"/>
    <property type="match status" value="1"/>
</dbReference>
<dbReference type="PRINTS" id="PR00326">
    <property type="entry name" value="GTP1OBG"/>
</dbReference>
<dbReference type="SUPFAM" id="SSF82051">
    <property type="entry name" value="Obg GTP-binding protein N-terminal domain"/>
    <property type="match status" value="1"/>
</dbReference>
<dbReference type="SUPFAM" id="SSF52540">
    <property type="entry name" value="P-loop containing nucleoside triphosphate hydrolases"/>
    <property type="match status" value="1"/>
</dbReference>
<dbReference type="PROSITE" id="PS51710">
    <property type="entry name" value="G_OBG"/>
    <property type="match status" value="1"/>
</dbReference>
<dbReference type="PROSITE" id="PS00905">
    <property type="entry name" value="GTP1_OBG"/>
    <property type="match status" value="1"/>
</dbReference>
<dbReference type="PROSITE" id="PS51883">
    <property type="entry name" value="OBG"/>
    <property type="match status" value="1"/>
</dbReference>
<proteinExistence type="inferred from homology"/>
<protein>
    <recommendedName>
        <fullName evidence="1">GTPase Obg</fullName>
        <ecNumber evidence="1">3.6.5.-</ecNumber>
    </recommendedName>
    <alternativeName>
        <fullName evidence="1">GTP-binding protein Obg</fullName>
    </alternativeName>
</protein>